<reference key="1">
    <citation type="journal article" date="2001" name="Mol. Biol. Evol.">
        <title>Mechanisms for evolving hypervariability: the case of conopeptides.</title>
        <authorList>
            <person name="Conticello S.G."/>
            <person name="Gilad Y."/>
            <person name="Avidan N."/>
            <person name="Ben-Asher E."/>
            <person name="Levy Z."/>
            <person name="Fainzilber M."/>
        </authorList>
    </citation>
    <scope>NUCLEOTIDE SEQUENCE [MRNA]</scope>
    <source>
        <tissue>Venom duct</tissue>
    </source>
</reference>
<dbReference type="EMBL" id="AF215096">
    <property type="protein sequence ID" value="AAG60517.1"/>
    <property type="molecule type" value="mRNA"/>
</dbReference>
<dbReference type="EMBL" id="AF214963">
    <property type="protein sequence ID" value="AAG60391.1"/>
    <property type="molecule type" value="mRNA"/>
</dbReference>
<dbReference type="ConoServer" id="650">
    <property type="toxin name" value="Tx-D021 precursor"/>
</dbReference>
<dbReference type="GO" id="GO:0005576">
    <property type="term" value="C:extracellular region"/>
    <property type="evidence" value="ECO:0007669"/>
    <property type="project" value="UniProtKB-SubCell"/>
</dbReference>
<dbReference type="GO" id="GO:0090729">
    <property type="term" value="F:toxin activity"/>
    <property type="evidence" value="ECO:0007669"/>
    <property type="project" value="UniProtKB-KW"/>
</dbReference>
<dbReference type="InterPro" id="IPR031565">
    <property type="entry name" value="T-conotoxin"/>
</dbReference>
<dbReference type="Pfam" id="PF16981">
    <property type="entry name" value="Chi-conotoxin"/>
    <property type="match status" value="1"/>
</dbReference>
<proteinExistence type="inferred from homology"/>
<sequence length="61" mass="6697">MRCLPVFVILLLLIASTPSVDARAKTRDDMSLASFHDDAKRILQILQDRSGCCVIDSNCCG</sequence>
<evidence type="ECO:0000250" key="1"/>
<evidence type="ECO:0000255" key="2"/>
<evidence type="ECO:0000305" key="3"/>
<evidence type="ECO:0000305" key="4">
    <source>
    </source>
</evidence>
<evidence type="ECO:0000312" key="5">
    <source>
        <dbReference type="EMBL" id="AAG60391.1"/>
    </source>
</evidence>
<evidence type="ECO:0000312" key="6">
    <source>
        <dbReference type="EMBL" id="AAG60517.1"/>
    </source>
</evidence>
<organism>
    <name type="scientific">Conus textile</name>
    <name type="common">Cloth-of-gold cone</name>
    <dbReference type="NCBI Taxonomy" id="6494"/>
    <lineage>
        <taxon>Eukaryota</taxon>
        <taxon>Metazoa</taxon>
        <taxon>Spiralia</taxon>
        <taxon>Lophotrochozoa</taxon>
        <taxon>Mollusca</taxon>
        <taxon>Gastropoda</taxon>
        <taxon>Caenogastropoda</taxon>
        <taxon>Neogastropoda</taxon>
        <taxon>Conoidea</taxon>
        <taxon>Conidae</taxon>
        <taxon>Conus</taxon>
        <taxon>Cylinder</taxon>
    </lineage>
</organism>
<name>CT21_CONTE</name>
<accession>Q9BH21</accession>
<feature type="signal peptide" evidence="2">
    <location>
        <begin position="1"/>
        <end position="22"/>
    </location>
</feature>
<feature type="propeptide" id="PRO_0000274088" evidence="1">
    <location>
        <begin position="23"/>
        <end position="48"/>
    </location>
</feature>
<feature type="peptide" id="PRO_0000274089" description="Conotoxin Tx-D021">
    <location>
        <begin position="50"/>
        <end position="60"/>
    </location>
</feature>
<feature type="modified residue" description="Cysteine amide" evidence="1">
    <location>
        <position position="60"/>
    </location>
</feature>
<keyword id="KW-0027">Amidation</keyword>
<keyword id="KW-0165">Cleavage on pair of basic residues</keyword>
<keyword id="KW-1015">Disulfide bond</keyword>
<keyword id="KW-0964">Secreted</keyword>
<keyword id="KW-0732">Signal</keyword>
<keyword id="KW-0800">Toxin</keyword>
<protein>
    <recommendedName>
        <fullName evidence="6">Conotoxin Tx-D021</fullName>
    </recommendedName>
    <alternativeName>
        <fullName evidence="5">Tx-D022</fullName>
    </alternativeName>
</protein>
<comment type="subcellular location">
    <subcellularLocation>
        <location evidence="4">Secreted</location>
    </subcellularLocation>
</comment>
<comment type="tissue specificity">
    <text evidence="4">Expressed by the venom duct.</text>
</comment>
<comment type="domain">
    <text evidence="3">The cysteine framework is V (CC-CC).</text>
</comment>
<comment type="PTM">
    <text evidence="3">Contains 2 disulfide bonds that can be either 'C1-C3, C2-C4' or 'C1-C4, C2-C3', since these disulfide connectivities have been observed for conotoxins with cysteine framework V (for examples, see AC P0DQQ7 and AC P81755).</text>
</comment>
<comment type="similarity">
    <text evidence="3">Belongs to the conotoxin T superfamily.</text>
</comment>